<feature type="chain" id="PRO_0000251202" description="Uncharacterized protein C17orf50">
    <location>
        <begin position="1"/>
        <end position="174"/>
    </location>
</feature>
<feature type="region of interest" description="Disordered" evidence="1">
    <location>
        <begin position="1"/>
        <end position="69"/>
    </location>
</feature>
<feature type="compositionally biased region" description="Basic and acidic residues" evidence="1">
    <location>
        <begin position="1"/>
        <end position="31"/>
    </location>
</feature>
<feature type="compositionally biased region" description="Basic and acidic residues" evidence="1">
    <location>
        <begin position="52"/>
        <end position="67"/>
    </location>
</feature>
<feature type="sequence variant" id="VAR_050899" description="In dbSNP:rs4795087.">
    <original>D</original>
    <variation>E</variation>
    <location>
        <position position="22"/>
    </location>
</feature>
<sequence length="174" mass="19346">MDKHGVKTPLWKKETEELRAEDAEQEEGKEGSEDEDEDNQRPLEDSATEGEEPPRVAEEGEGRERRSVSYCPLRQESSTQQVALLRRADSGFWGWLGPLALLGGLTAPTDRKRSLPEEPCVLEIRRRPPRRGGCACCELLFCKKCRSLHSHPAYVAHCVLDHPDLGKAGAAGNS</sequence>
<dbReference type="EMBL" id="AY557347">
    <property type="protein sequence ID" value="AAS67921.1"/>
    <property type="molecule type" value="mRNA"/>
</dbReference>
<dbReference type="CCDS" id="CCDS42298.1"/>
<dbReference type="RefSeq" id="NP_660315.2">
    <property type="nucleotide sequence ID" value="NM_145272.4"/>
</dbReference>
<dbReference type="BioGRID" id="127018">
    <property type="interactions" value="12"/>
</dbReference>
<dbReference type="FunCoup" id="Q8WW18">
    <property type="interactions" value="4"/>
</dbReference>
<dbReference type="IntAct" id="Q8WW18">
    <property type="interactions" value="9"/>
</dbReference>
<dbReference type="STRING" id="9606.ENSP00000475146"/>
<dbReference type="GlyGen" id="Q8WW18">
    <property type="glycosylation" value="1 site, 1 O-linked glycan (1 site)"/>
</dbReference>
<dbReference type="BioMuta" id="C17orf50"/>
<dbReference type="DMDM" id="115502131"/>
<dbReference type="jPOST" id="Q8WW18"/>
<dbReference type="MassIVE" id="Q8WW18"/>
<dbReference type="PaxDb" id="9606-ENSP00000475146"/>
<dbReference type="PeptideAtlas" id="Q8WW18"/>
<dbReference type="ProteomicsDB" id="74848"/>
<dbReference type="Antibodypedia" id="77192">
    <property type="antibodies" value="5 antibodies from 5 providers"/>
</dbReference>
<dbReference type="DNASU" id="146853"/>
<dbReference type="Ensembl" id="ENST00000605587.2">
    <property type="protein sequence ID" value="ENSP00000475146.1"/>
    <property type="gene ID" value="ENSG00000270806.2"/>
</dbReference>
<dbReference type="GeneID" id="146853"/>
<dbReference type="KEGG" id="hsa:146853"/>
<dbReference type="MANE-Select" id="ENST00000605587.2">
    <property type="protein sequence ID" value="ENSP00000475146.1"/>
    <property type="RefSeq nucleotide sequence ID" value="NM_145272.4"/>
    <property type="RefSeq protein sequence ID" value="NP_660315.2"/>
</dbReference>
<dbReference type="UCSC" id="uc002hjx.4">
    <property type="organism name" value="human"/>
</dbReference>
<dbReference type="AGR" id="HGNC:29581"/>
<dbReference type="CTD" id="146853"/>
<dbReference type="GeneCards" id="C17orf50"/>
<dbReference type="HGNC" id="HGNC:29581">
    <property type="gene designation" value="C17orf50"/>
</dbReference>
<dbReference type="HPA" id="ENSG00000270806">
    <property type="expression patterns" value="Tissue enriched (testis)"/>
</dbReference>
<dbReference type="neXtProt" id="NX_Q8WW18"/>
<dbReference type="OpenTargets" id="ENSG00000270806"/>
<dbReference type="PharmGKB" id="PA142672233"/>
<dbReference type="VEuPathDB" id="HostDB:ENSG00000270806"/>
<dbReference type="eggNOG" id="ENOG502SXTN">
    <property type="taxonomic scope" value="Eukaryota"/>
</dbReference>
<dbReference type="GeneTree" id="ENSGT00390000007830"/>
<dbReference type="HOGENOM" id="CLU_102789_0_0_1"/>
<dbReference type="InParanoid" id="Q8WW18"/>
<dbReference type="OMA" id="HCVLEHP"/>
<dbReference type="OrthoDB" id="9666283at2759"/>
<dbReference type="PAN-GO" id="Q8WW18">
    <property type="GO annotations" value="0 GO annotations based on evolutionary models"/>
</dbReference>
<dbReference type="PhylomeDB" id="Q8WW18"/>
<dbReference type="TreeFam" id="TF337655"/>
<dbReference type="PathwayCommons" id="Q8WW18"/>
<dbReference type="SignaLink" id="Q8WW18"/>
<dbReference type="BioGRID-ORCS" id="146853">
    <property type="hits" value="35 hits in 1108 CRISPR screens"/>
</dbReference>
<dbReference type="ChiTaRS" id="C17orf50">
    <property type="organism name" value="human"/>
</dbReference>
<dbReference type="GenomeRNAi" id="146853"/>
<dbReference type="Pharos" id="Q8WW18">
    <property type="development level" value="Tdark"/>
</dbReference>
<dbReference type="PRO" id="PR:Q8WW18"/>
<dbReference type="Proteomes" id="UP000005640">
    <property type="component" value="Chromosome 17"/>
</dbReference>
<dbReference type="RNAct" id="Q8WW18">
    <property type="molecule type" value="protein"/>
</dbReference>
<dbReference type="Bgee" id="ENSG00000270806">
    <property type="expression patterns" value="Expressed in left testis and 91 other cell types or tissues"/>
</dbReference>
<dbReference type="ExpressionAtlas" id="Q8WW18">
    <property type="expression patterns" value="baseline and differential"/>
</dbReference>
<dbReference type="InterPro" id="IPR029174">
    <property type="entry name" value="DUF4637"/>
</dbReference>
<dbReference type="PANTHER" id="PTHR37878:SF1">
    <property type="entry name" value="DUF4637 DOMAIN-CONTAINING PROTEIN"/>
    <property type="match status" value="1"/>
</dbReference>
<dbReference type="PANTHER" id="PTHR37878">
    <property type="entry name" value="HYPOTHETICAL PROTEIN LOC689039"/>
    <property type="match status" value="1"/>
</dbReference>
<dbReference type="Pfam" id="PF15470">
    <property type="entry name" value="DUF4637"/>
    <property type="match status" value="1"/>
</dbReference>
<gene>
    <name type="primary">C17orf50</name>
</gene>
<proteinExistence type="evidence at protein level"/>
<reference key="1">
    <citation type="submission" date="2004-02" db="EMBL/GenBank/DDBJ databases">
        <authorList>
            <person name="Li H."/>
            <person name="Ke R."/>
            <person name="Zhong G."/>
            <person name="Shen C."/>
            <person name="Zhou G."/>
            <person name="Lin L."/>
            <person name="Yang S."/>
        </authorList>
    </citation>
    <scope>NUCLEOTIDE SEQUENCE [LARGE SCALE MRNA]</scope>
</reference>
<evidence type="ECO:0000256" key="1">
    <source>
        <dbReference type="SAM" id="MobiDB-lite"/>
    </source>
</evidence>
<name>CQ050_HUMAN</name>
<protein>
    <recommendedName>
        <fullName>Uncharacterized protein C17orf50</fullName>
    </recommendedName>
</protein>
<comment type="interaction">
    <interactant intactId="EBI-12877892">
        <id>Q8WW18</id>
    </interactant>
    <interactant intactId="EBI-11954519">
        <id>Q49AR9</id>
        <label>ANKS1A</label>
    </interactant>
    <organismsDiffer>false</organismsDiffer>
    <experiments>3</experiments>
</comment>
<comment type="interaction">
    <interactant intactId="EBI-12877892">
        <id>Q8WW18</id>
    </interactant>
    <interactant intactId="EBI-10292696">
        <id>Q96Q77</id>
        <label>CIB3</label>
    </interactant>
    <organismsDiffer>false</organismsDiffer>
    <experiments>3</experiments>
</comment>
<comment type="interaction">
    <interactant intactId="EBI-12877892">
        <id>Q8WW18</id>
    </interactant>
    <interactant intactId="EBI-11962928">
        <id>Q9UI47-2</id>
        <label>CTNNA3</label>
    </interactant>
    <organismsDiffer>false</organismsDiffer>
    <experiments>3</experiments>
</comment>
<comment type="interaction">
    <interactant intactId="EBI-12877892">
        <id>Q8WW18</id>
    </interactant>
    <interactant intactId="EBI-1047093">
        <id>O76011</id>
        <label>KRT34</label>
    </interactant>
    <organismsDiffer>false</organismsDiffer>
    <experiments>3</experiments>
</comment>
<comment type="interaction">
    <interactant intactId="EBI-12877892">
        <id>Q8WW18</id>
    </interactant>
    <interactant intactId="EBI-10172150">
        <id>P60370</id>
        <label>KRTAP10-5</label>
    </interactant>
    <organismsDiffer>false</organismsDiffer>
    <experiments>3</experiments>
</comment>
<comment type="interaction">
    <interactant intactId="EBI-12877892">
        <id>Q8WW18</id>
    </interactant>
    <interactant intactId="EBI-10171774">
        <id>P60410</id>
        <label>KRTAP10-8</label>
    </interactant>
    <organismsDiffer>false</organismsDiffer>
    <experiments>3</experiments>
</comment>
<comment type="interaction">
    <interactant intactId="EBI-12877892">
        <id>Q8WW18</id>
    </interactant>
    <interactant intactId="EBI-11956269">
        <id>Q92824-2</id>
        <label>PCSK5</label>
    </interactant>
    <organismsDiffer>false</organismsDiffer>
    <experiments>3</experiments>
</comment>
<comment type="interaction">
    <interactant intactId="EBI-12877892">
        <id>Q8WW18</id>
    </interactant>
    <interactant intactId="EBI-11747707">
        <id>B2RUY7</id>
        <label>VWC2L</label>
    </interactant>
    <organismsDiffer>false</organismsDiffer>
    <experiments>3</experiments>
</comment>
<comment type="interaction">
    <interactant intactId="EBI-12877892">
        <id>Q8WW18</id>
    </interactant>
    <interactant intactId="EBI-6427977">
        <id>Q96SQ5</id>
        <label>ZNF587</label>
    </interactant>
    <organismsDiffer>false</organismsDiffer>
    <experiments>3</experiments>
</comment>
<keyword id="KW-1267">Proteomics identification</keyword>
<keyword id="KW-1185">Reference proteome</keyword>
<organism>
    <name type="scientific">Homo sapiens</name>
    <name type="common">Human</name>
    <dbReference type="NCBI Taxonomy" id="9606"/>
    <lineage>
        <taxon>Eukaryota</taxon>
        <taxon>Metazoa</taxon>
        <taxon>Chordata</taxon>
        <taxon>Craniata</taxon>
        <taxon>Vertebrata</taxon>
        <taxon>Euteleostomi</taxon>
        <taxon>Mammalia</taxon>
        <taxon>Eutheria</taxon>
        <taxon>Euarchontoglires</taxon>
        <taxon>Primates</taxon>
        <taxon>Haplorrhini</taxon>
        <taxon>Catarrhini</taxon>
        <taxon>Hominidae</taxon>
        <taxon>Homo</taxon>
    </lineage>
</organism>
<accession>Q8WW18</accession>
<accession>Q6Q621</accession>